<accession>P18030</accession>
<organism>
    <name type="scientific">Enterobacteria phage T6</name>
    <name type="common">Bacteriophage T6</name>
    <dbReference type="NCBI Taxonomy" id="10666"/>
    <lineage>
        <taxon>Viruses</taxon>
        <taxon>Duplodnaviria</taxon>
        <taxon>Heunggongvirae</taxon>
        <taxon>Uroviricota</taxon>
        <taxon>Caudoviricetes</taxon>
        <taxon>Straboviridae</taxon>
        <taxon>Tevenvirinae</taxon>
        <taxon>Tequatrovirus</taxon>
        <taxon>Tequatrovirus T6</taxon>
    </lineage>
</organism>
<dbReference type="EC" id="2.1.2.8"/>
<dbReference type="PIR" id="B34273">
    <property type="entry name" value="SZBPT6"/>
</dbReference>
<dbReference type="SMR" id="P18030"/>
<dbReference type="GO" id="GO:0047153">
    <property type="term" value="F:deoxycytidylate 5-hydroxymethyltransferase activity"/>
    <property type="evidence" value="ECO:0007669"/>
    <property type="project" value="UniProtKB-EC"/>
</dbReference>
<dbReference type="Gene3D" id="3.30.572.10">
    <property type="entry name" value="Thymidylate synthase/dCMP hydroxymethylase domain"/>
    <property type="match status" value="1"/>
</dbReference>
<dbReference type="InterPro" id="IPR014619">
    <property type="entry name" value="Deoxycytidylate_hydroxyMease"/>
</dbReference>
<dbReference type="InterPro" id="IPR023451">
    <property type="entry name" value="Thymidate_synth/dCMP_Mease_dom"/>
</dbReference>
<dbReference type="InterPro" id="IPR036926">
    <property type="entry name" value="Thymidate_synth/dCMP_Mease_sf"/>
</dbReference>
<dbReference type="Pfam" id="PF00303">
    <property type="entry name" value="Thymidylat_synt"/>
    <property type="match status" value="1"/>
</dbReference>
<dbReference type="PIRSF" id="PIRSF036750">
    <property type="entry name" value="dCMP_HMase"/>
    <property type="match status" value="1"/>
</dbReference>
<dbReference type="SUPFAM" id="SSF55831">
    <property type="entry name" value="Thymidylate synthase/dCMP hydroxymethylase"/>
    <property type="match status" value="1"/>
</dbReference>
<name>DCHM_BPT6</name>
<reference key="1">
    <citation type="journal article" date="1988" name="Eur. J. Biochem.">
        <title>Deoxycytidylate hydroxymethylase gene of bacteriophage T4. Nucleotide sequence determination and over-expression of the gene.</title>
        <authorList>
            <person name="Lamm N."/>
            <person name="Wang Y."/>
            <person name="Mathews C.K."/>
            <person name="Rueger W."/>
        </authorList>
    </citation>
    <scope>NUCLEOTIDE SEQUENCE</scope>
</reference>
<organismHost>
    <name type="scientific">Escherichia coli</name>
    <dbReference type="NCBI Taxonomy" id="562"/>
</organismHost>
<proteinExistence type="inferred from homology"/>
<sequence>MISDSMTVEEIRLHLGLALKEKDFVVDKTGVKTIEIIGASFVADEPFIFGALNDEYIQRELEWYKSKSLFVKDIPGETPKIWQQVASSKGEINSNYGWAIWSEDNYAQYDMCLAELGQNPDSRRGIMIYTRPSMQFDYNKDGMSDFMCTNTVQYLIRDKKINAVVNMRSNDVVFGFRNDYAWQKYVLDKLVSDLNAGDPTRQYKAGSIIWNVGSLHVYSRHFYLVDHWWKTGETHIVKKDYKGEWK</sequence>
<protein>
    <recommendedName>
        <fullName>Deoxycytidylate 5-hydroxymethyltransferase</fullName>
        <shortName>Deoxycytidylate hydroxymethylase</shortName>
        <ecNumber>2.1.2.8</ecNumber>
    </recommendedName>
    <alternativeName>
        <fullName>dCMP hydroxymethylase</fullName>
        <shortName>dCMP HMase</shortName>
    </alternativeName>
</protein>
<keyword id="KW-0808">Transferase</keyword>
<comment type="catalytic activity">
    <reaction>
        <text>dCMP + (6R)-5,10-methylene-5,6,7,8-tetrahydrofolate + H2O = 5-hydroxymethyl-dCMP + (6S)-5,6,7,8-tetrahydrofolate</text>
        <dbReference type="Rhea" id="RHEA:11280"/>
        <dbReference type="ChEBI" id="CHEBI:15377"/>
        <dbReference type="ChEBI" id="CHEBI:15636"/>
        <dbReference type="ChEBI" id="CHEBI:57453"/>
        <dbReference type="ChEBI" id="CHEBI:57566"/>
        <dbReference type="ChEBI" id="CHEBI:57962"/>
        <dbReference type="EC" id="2.1.2.8"/>
    </reaction>
</comment>
<comment type="similarity">
    <text evidence="2">Belongs to the thymidylate synthase family.</text>
</comment>
<feature type="chain" id="PRO_0000141069" description="Deoxycytidylate 5-hydroxymethyltransferase">
    <location>
        <begin position="1"/>
        <end position="246"/>
    </location>
</feature>
<feature type="active site" evidence="1">
    <location>
        <position position="148"/>
    </location>
</feature>
<gene>
    <name type="primary">42</name>
</gene>
<evidence type="ECO:0000255" key="1"/>
<evidence type="ECO:0000305" key="2"/>